<reference key="1">
    <citation type="submission" date="2007-07" db="EMBL/GenBank/DDBJ databases">
        <title>Complete sequence of chromosome of Shewanella baltica OS185.</title>
        <authorList>
            <consortium name="US DOE Joint Genome Institute"/>
            <person name="Copeland A."/>
            <person name="Lucas S."/>
            <person name="Lapidus A."/>
            <person name="Barry K."/>
            <person name="Glavina del Rio T."/>
            <person name="Dalin E."/>
            <person name="Tice H."/>
            <person name="Pitluck S."/>
            <person name="Sims D."/>
            <person name="Brettin T."/>
            <person name="Bruce D."/>
            <person name="Detter J.C."/>
            <person name="Han C."/>
            <person name="Schmutz J."/>
            <person name="Larimer F."/>
            <person name="Land M."/>
            <person name="Hauser L."/>
            <person name="Kyrpides N."/>
            <person name="Mikhailova N."/>
            <person name="Brettar I."/>
            <person name="Rodrigues J."/>
            <person name="Konstantinidis K."/>
            <person name="Tiedje J."/>
            <person name="Richardson P."/>
        </authorList>
    </citation>
    <scope>NUCLEOTIDE SEQUENCE [LARGE SCALE GENOMIC DNA]</scope>
    <source>
        <strain>OS185</strain>
    </source>
</reference>
<accession>A6WQB8</accession>
<dbReference type="EC" id="6.1.1.15" evidence="1"/>
<dbReference type="EMBL" id="CP000753">
    <property type="protein sequence ID" value="ABS09007.1"/>
    <property type="molecule type" value="Genomic_DNA"/>
</dbReference>
<dbReference type="RefSeq" id="WP_012089659.1">
    <property type="nucleotide sequence ID" value="NC_009665.1"/>
</dbReference>
<dbReference type="SMR" id="A6WQB8"/>
<dbReference type="KEGG" id="sbm:Shew185_2873"/>
<dbReference type="HOGENOM" id="CLU_016739_0_0_6"/>
<dbReference type="GO" id="GO:0005829">
    <property type="term" value="C:cytosol"/>
    <property type="evidence" value="ECO:0007669"/>
    <property type="project" value="TreeGrafter"/>
</dbReference>
<dbReference type="GO" id="GO:0002161">
    <property type="term" value="F:aminoacyl-tRNA deacylase activity"/>
    <property type="evidence" value="ECO:0007669"/>
    <property type="project" value="InterPro"/>
</dbReference>
<dbReference type="GO" id="GO:0005524">
    <property type="term" value="F:ATP binding"/>
    <property type="evidence" value="ECO:0007669"/>
    <property type="project" value="UniProtKB-UniRule"/>
</dbReference>
<dbReference type="GO" id="GO:0004827">
    <property type="term" value="F:proline-tRNA ligase activity"/>
    <property type="evidence" value="ECO:0007669"/>
    <property type="project" value="UniProtKB-UniRule"/>
</dbReference>
<dbReference type="GO" id="GO:0006433">
    <property type="term" value="P:prolyl-tRNA aminoacylation"/>
    <property type="evidence" value="ECO:0007669"/>
    <property type="project" value="UniProtKB-UniRule"/>
</dbReference>
<dbReference type="CDD" id="cd04334">
    <property type="entry name" value="ProRS-INS"/>
    <property type="match status" value="1"/>
</dbReference>
<dbReference type="CDD" id="cd00861">
    <property type="entry name" value="ProRS_anticodon_short"/>
    <property type="match status" value="1"/>
</dbReference>
<dbReference type="CDD" id="cd00779">
    <property type="entry name" value="ProRS_core_prok"/>
    <property type="match status" value="1"/>
</dbReference>
<dbReference type="FunFam" id="3.30.930.10:FF:000015">
    <property type="entry name" value="Proline--tRNA ligase"/>
    <property type="match status" value="1"/>
</dbReference>
<dbReference type="FunFam" id="3.30.930.10:FF:000043">
    <property type="entry name" value="Proline--tRNA ligase"/>
    <property type="match status" value="1"/>
</dbReference>
<dbReference type="FunFam" id="3.40.50.800:FF:000006">
    <property type="entry name" value="Proline--tRNA ligase"/>
    <property type="match status" value="1"/>
</dbReference>
<dbReference type="FunFam" id="3.90.960.10:FF:000001">
    <property type="entry name" value="Proline--tRNA ligase"/>
    <property type="match status" value="1"/>
</dbReference>
<dbReference type="Gene3D" id="3.40.50.800">
    <property type="entry name" value="Anticodon-binding domain"/>
    <property type="match status" value="1"/>
</dbReference>
<dbReference type="Gene3D" id="3.30.930.10">
    <property type="entry name" value="Bira Bifunctional Protein, Domain 2"/>
    <property type="match status" value="2"/>
</dbReference>
<dbReference type="Gene3D" id="3.90.960.10">
    <property type="entry name" value="YbaK/aminoacyl-tRNA synthetase-associated domain"/>
    <property type="match status" value="1"/>
</dbReference>
<dbReference type="HAMAP" id="MF_01569">
    <property type="entry name" value="Pro_tRNA_synth_type1"/>
    <property type="match status" value="1"/>
</dbReference>
<dbReference type="InterPro" id="IPR002314">
    <property type="entry name" value="aa-tRNA-synt_IIb"/>
</dbReference>
<dbReference type="InterPro" id="IPR006195">
    <property type="entry name" value="aa-tRNA-synth_II"/>
</dbReference>
<dbReference type="InterPro" id="IPR045864">
    <property type="entry name" value="aa-tRNA-synth_II/BPL/LPL"/>
</dbReference>
<dbReference type="InterPro" id="IPR004154">
    <property type="entry name" value="Anticodon-bd"/>
</dbReference>
<dbReference type="InterPro" id="IPR036621">
    <property type="entry name" value="Anticodon-bd_dom_sf"/>
</dbReference>
<dbReference type="InterPro" id="IPR002316">
    <property type="entry name" value="Pro-tRNA-ligase_IIa"/>
</dbReference>
<dbReference type="InterPro" id="IPR004500">
    <property type="entry name" value="Pro-tRNA-synth_IIa_bac-type"/>
</dbReference>
<dbReference type="InterPro" id="IPR023717">
    <property type="entry name" value="Pro-tRNA-Synthase_IIa_type1"/>
</dbReference>
<dbReference type="InterPro" id="IPR050062">
    <property type="entry name" value="Pro-tRNA_synthetase"/>
</dbReference>
<dbReference type="InterPro" id="IPR044140">
    <property type="entry name" value="ProRS_anticodon_short"/>
</dbReference>
<dbReference type="InterPro" id="IPR033730">
    <property type="entry name" value="ProRS_core_prok"/>
</dbReference>
<dbReference type="InterPro" id="IPR036754">
    <property type="entry name" value="YbaK/aa-tRNA-synt-asso_dom_sf"/>
</dbReference>
<dbReference type="InterPro" id="IPR007214">
    <property type="entry name" value="YbaK/aa-tRNA-synth-assoc-dom"/>
</dbReference>
<dbReference type="NCBIfam" id="NF006625">
    <property type="entry name" value="PRK09194.1"/>
    <property type="match status" value="1"/>
</dbReference>
<dbReference type="NCBIfam" id="TIGR00409">
    <property type="entry name" value="proS_fam_II"/>
    <property type="match status" value="1"/>
</dbReference>
<dbReference type="PANTHER" id="PTHR42753">
    <property type="entry name" value="MITOCHONDRIAL RIBOSOME PROTEIN L39/PROLYL-TRNA LIGASE FAMILY MEMBER"/>
    <property type="match status" value="1"/>
</dbReference>
<dbReference type="PANTHER" id="PTHR42753:SF2">
    <property type="entry name" value="PROLINE--TRNA LIGASE"/>
    <property type="match status" value="1"/>
</dbReference>
<dbReference type="Pfam" id="PF03129">
    <property type="entry name" value="HGTP_anticodon"/>
    <property type="match status" value="1"/>
</dbReference>
<dbReference type="Pfam" id="PF00587">
    <property type="entry name" value="tRNA-synt_2b"/>
    <property type="match status" value="1"/>
</dbReference>
<dbReference type="Pfam" id="PF04073">
    <property type="entry name" value="tRNA_edit"/>
    <property type="match status" value="1"/>
</dbReference>
<dbReference type="PIRSF" id="PIRSF001535">
    <property type="entry name" value="ProRS_1"/>
    <property type="match status" value="1"/>
</dbReference>
<dbReference type="PRINTS" id="PR01046">
    <property type="entry name" value="TRNASYNTHPRO"/>
</dbReference>
<dbReference type="SUPFAM" id="SSF52954">
    <property type="entry name" value="Class II aaRS ABD-related"/>
    <property type="match status" value="1"/>
</dbReference>
<dbReference type="SUPFAM" id="SSF55681">
    <property type="entry name" value="Class II aaRS and biotin synthetases"/>
    <property type="match status" value="1"/>
</dbReference>
<dbReference type="SUPFAM" id="SSF55826">
    <property type="entry name" value="YbaK/ProRS associated domain"/>
    <property type="match status" value="1"/>
</dbReference>
<dbReference type="PROSITE" id="PS50862">
    <property type="entry name" value="AA_TRNA_LIGASE_II"/>
    <property type="match status" value="1"/>
</dbReference>
<name>SYP_SHEB8</name>
<gene>
    <name evidence="1" type="primary">proS</name>
    <name type="ordered locus">Shew185_2873</name>
</gene>
<sequence>MRVSKYLLSTQKETPANAEVISHQLMLRAGMIRRNASGLYSYLPTGLRVLRKVEAIVREEMNKAGAIEILMPMVQPADLWVETGRWEKFGPELLRFKDRHNRDFVLGPTHEEVITDLIRKEVSSYKQLPLNLYQIQTKFRDEVRPRFGMMRSREFLMKDAYSFHLDVDTMNETYEAMYNAYSNILTRMGLAFRPVLADTGSIGGSMSHEFHVLAQSGEDLIAYSTGSDYAANIEKAESPVPTEPRGAATEELRLVDTPNAKTIAELVEQFDLDITKTVKTLIVVGASEATPLVALIVRGDHELNEVKADKLDLVASPVEMASEALIRDAIGAGPGSLGPIGLNIPIVIDHSVSVMSDFAAGANVDDKHYFGINWERDLPTAQVADIRNVVEGEPTPDGLGTYAMARGIEVGHIFQLGTNYSKSMNATVLDENGKSQVLLMGCYGVGVSRIVAAAIEQNFDDRGIIWPEAIAPFSVGILPMNMHKSHRVTDIAEQLYKDLNEAGIDVLLDDRKERPGVMFADMELIGIPHTVVIGDRNIDAGVFEYKNRRTGEKQDIPFDQLLDFLKNAVKG</sequence>
<comment type="function">
    <text evidence="1">Catalyzes the attachment of proline to tRNA(Pro) in a two-step reaction: proline is first activated by ATP to form Pro-AMP and then transferred to the acceptor end of tRNA(Pro). As ProRS can inadvertently accommodate and process non-cognate amino acids such as alanine and cysteine, to avoid such errors it has two additional distinct editing activities against alanine. One activity is designated as 'pretransfer' editing and involves the tRNA(Pro)-independent hydrolysis of activated Ala-AMP. The other activity is designated 'posttransfer' editing and involves deacylation of mischarged Ala-tRNA(Pro). The misacylated Cys-tRNA(Pro) is not edited by ProRS.</text>
</comment>
<comment type="catalytic activity">
    <reaction evidence="1">
        <text>tRNA(Pro) + L-proline + ATP = L-prolyl-tRNA(Pro) + AMP + diphosphate</text>
        <dbReference type="Rhea" id="RHEA:14305"/>
        <dbReference type="Rhea" id="RHEA-COMP:9700"/>
        <dbReference type="Rhea" id="RHEA-COMP:9702"/>
        <dbReference type="ChEBI" id="CHEBI:30616"/>
        <dbReference type="ChEBI" id="CHEBI:33019"/>
        <dbReference type="ChEBI" id="CHEBI:60039"/>
        <dbReference type="ChEBI" id="CHEBI:78442"/>
        <dbReference type="ChEBI" id="CHEBI:78532"/>
        <dbReference type="ChEBI" id="CHEBI:456215"/>
        <dbReference type="EC" id="6.1.1.15"/>
    </reaction>
</comment>
<comment type="subunit">
    <text evidence="1">Homodimer.</text>
</comment>
<comment type="subcellular location">
    <subcellularLocation>
        <location evidence="1">Cytoplasm</location>
    </subcellularLocation>
</comment>
<comment type="domain">
    <text evidence="1">Consists of three domains: the N-terminal catalytic domain, the editing domain and the C-terminal anticodon-binding domain.</text>
</comment>
<comment type="similarity">
    <text evidence="1">Belongs to the class-II aminoacyl-tRNA synthetase family. ProS type 1 subfamily.</text>
</comment>
<feature type="chain" id="PRO_1000069160" description="Proline--tRNA ligase">
    <location>
        <begin position="1"/>
        <end position="571"/>
    </location>
</feature>
<proteinExistence type="inferred from homology"/>
<organism>
    <name type="scientific">Shewanella baltica (strain OS185)</name>
    <dbReference type="NCBI Taxonomy" id="402882"/>
    <lineage>
        <taxon>Bacteria</taxon>
        <taxon>Pseudomonadati</taxon>
        <taxon>Pseudomonadota</taxon>
        <taxon>Gammaproteobacteria</taxon>
        <taxon>Alteromonadales</taxon>
        <taxon>Shewanellaceae</taxon>
        <taxon>Shewanella</taxon>
    </lineage>
</organism>
<keyword id="KW-0030">Aminoacyl-tRNA synthetase</keyword>
<keyword id="KW-0067">ATP-binding</keyword>
<keyword id="KW-0963">Cytoplasm</keyword>
<keyword id="KW-0436">Ligase</keyword>
<keyword id="KW-0547">Nucleotide-binding</keyword>
<keyword id="KW-0648">Protein biosynthesis</keyword>
<evidence type="ECO:0000255" key="1">
    <source>
        <dbReference type="HAMAP-Rule" id="MF_01569"/>
    </source>
</evidence>
<protein>
    <recommendedName>
        <fullName evidence="1">Proline--tRNA ligase</fullName>
        <ecNumber evidence="1">6.1.1.15</ecNumber>
    </recommendedName>
    <alternativeName>
        <fullName evidence="1">Prolyl-tRNA synthetase</fullName>
        <shortName evidence="1">ProRS</shortName>
    </alternativeName>
</protein>